<reference key="1">
    <citation type="journal article" date="1998" name="DNA Res.">
        <title>Structural analysis of Arabidopsis thaliana chromosome 5. IV. Sequence features of the regions of 1,456,315 bp covered by nineteen physically assigned P1 and TAC clones.</title>
        <authorList>
            <person name="Sato S."/>
            <person name="Kaneko T."/>
            <person name="Kotani H."/>
            <person name="Nakamura Y."/>
            <person name="Asamizu E."/>
            <person name="Miyajima N."/>
            <person name="Tabata S."/>
        </authorList>
    </citation>
    <scope>NUCLEOTIDE SEQUENCE [LARGE SCALE GENOMIC DNA]</scope>
    <source>
        <strain>cv. Columbia</strain>
    </source>
</reference>
<reference key="2">
    <citation type="journal article" date="2017" name="Plant J.">
        <title>Araport11: a complete reannotation of the Arabidopsis thaliana reference genome.</title>
        <authorList>
            <person name="Cheng C.Y."/>
            <person name="Krishnakumar V."/>
            <person name="Chan A.P."/>
            <person name="Thibaud-Nissen F."/>
            <person name="Schobel S."/>
            <person name="Town C.D."/>
        </authorList>
    </citation>
    <scope>GENOME REANNOTATION</scope>
    <source>
        <strain>cv. Columbia</strain>
    </source>
</reference>
<reference key="3">
    <citation type="journal article" date="1999" name="Plant Mol. Biol.">
        <title>Analysis of Arabidopsis genome sequence reveals a large new gene family in plants.</title>
        <authorList>
            <person name="Ride J.P."/>
            <person name="Davies E.M."/>
            <person name="Franklin F.C.H."/>
            <person name="Marshall D.F."/>
        </authorList>
    </citation>
    <scope>GENE FAMILY</scope>
    <scope>NOMENCLATURE</scope>
    <source>
        <strain>cv. Columbia</strain>
    </source>
</reference>
<evidence type="ECO:0000255" key="1"/>
<evidence type="ECO:0000303" key="2">
    <source>
    </source>
</evidence>
<evidence type="ECO:0000305" key="3"/>
<evidence type="ECO:0000305" key="4">
    <source>
    </source>
</evidence>
<evidence type="ECO:0000312" key="5">
    <source>
        <dbReference type="Araport" id="AT5G39493"/>
    </source>
</evidence>
<evidence type="ECO:0000312" key="6">
    <source>
        <dbReference type="EMBL" id="BAB11024.1"/>
    </source>
</evidence>
<evidence type="ECO:0007829" key="7">
    <source>
        <dbReference type="PDB" id="6G7G"/>
    </source>
</evidence>
<name>SPH15_ARATH</name>
<organism>
    <name type="scientific">Arabidopsis thaliana</name>
    <name type="common">Mouse-ear cress</name>
    <dbReference type="NCBI Taxonomy" id="3702"/>
    <lineage>
        <taxon>Eukaryota</taxon>
        <taxon>Viridiplantae</taxon>
        <taxon>Streptophyta</taxon>
        <taxon>Embryophyta</taxon>
        <taxon>Tracheophyta</taxon>
        <taxon>Spermatophyta</taxon>
        <taxon>Magnoliopsida</taxon>
        <taxon>eudicotyledons</taxon>
        <taxon>Gunneridae</taxon>
        <taxon>Pentapetalae</taxon>
        <taxon>rosids</taxon>
        <taxon>malvids</taxon>
        <taxon>Brassicales</taxon>
        <taxon>Brassicaceae</taxon>
        <taxon>Camelineae</taxon>
        <taxon>Arabidopsis</taxon>
    </lineage>
</organism>
<comment type="subcellular location">
    <subcellularLocation>
        <location evidence="4">Secreted</location>
    </subcellularLocation>
</comment>
<comment type="similarity">
    <text evidence="3">Belongs to the plant self-incompatibility (S1) protein family.</text>
</comment>
<proteinExistence type="evidence at protein level"/>
<feature type="signal peptide" evidence="1">
    <location>
        <begin position="1"/>
        <end position="20"/>
    </location>
</feature>
<feature type="chain" id="PRO_5009348357" description="S-protein homolog 15">
    <location>
        <begin position="21"/>
        <end position="132"/>
    </location>
</feature>
<feature type="strand" evidence="7">
    <location>
        <begin position="25"/>
        <end position="33"/>
    </location>
</feature>
<feature type="strand" evidence="7">
    <location>
        <begin position="37"/>
        <end position="43"/>
    </location>
</feature>
<feature type="strand" evidence="7">
    <location>
        <begin position="51"/>
        <end position="63"/>
    </location>
</feature>
<feature type="turn" evidence="7">
    <location>
        <begin position="70"/>
        <end position="72"/>
    </location>
</feature>
<feature type="strand" evidence="7">
    <location>
        <begin position="75"/>
        <end position="79"/>
    </location>
</feature>
<feature type="strand" evidence="7">
    <location>
        <begin position="81"/>
        <end position="84"/>
    </location>
</feature>
<feature type="strand" evidence="7">
    <location>
        <begin position="88"/>
        <end position="93"/>
    </location>
</feature>
<feature type="strand" evidence="7">
    <location>
        <begin position="107"/>
        <end position="113"/>
    </location>
</feature>
<feature type="strand" evidence="7">
    <location>
        <begin position="120"/>
        <end position="122"/>
    </location>
</feature>
<feature type="strand" evidence="7">
    <location>
        <begin position="126"/>
        <end position="128"/>
    </location>
</feature>
<sequence>MSRLIFFILVTAIYFVGNEACKEIEIVIKNTLGPSRILQYHCRSGNTNVGVQYLNFKGTRIIKFKDDGTERSRWNCLFRQGINMKFFTEVEAYRPDLKHPLCGKRYELSARMDAIYFKMDERPPQPLNKWRS</sequence>
<protein>
    <recommendedName>
        <fullName evidence="2">S-protein homolog 15</fullName>
    </recommendedName>
</protein>
<gene>
    <name evidence="2" type="primary">SPH15</name>
    <name evidence="5" type="ordered locus">At5g39493</name>
    <name evidence="6" type="ORF">MUL8.19</name>
</gene>
<keyword id="KW-0002">3D-structure</keyword>
<keyword id="KW-1185">Reference proteome</keyword>
<keyword id="KW-0964">Secreted</keyword>
<keyword id="KW-0713">Self-incompatibility</keyword>
<keyword id="KW-0732">Signal</keyword>
<accession>Q9FLY6</accession>
<dbReference type="EMBL" id="AB009054">
    <property type="protein sequence ID" value="BAB11024.1"/>
    <property type="molecule type" value="Genomic_DNA"/>
</dbReference>
<dbReference type="EMBL" id="CP002688">
    <property type="protein sequence ID" value="AED94440.1"/>
    <property type="molecule type" value="Genomic_DNA"/>
</dbReference>
<dbReference type="RefSeq" id="NP_001119337.2">
    <property type="nucleotide sequence ID" value="NM_001125865.3"/>
</dbReference>
<dbReference type="PDB" id="6G7G">
    <property type="method" value="NMR"/>
    <property type="chains" value="A=21-132"/>
</dbReference>
<dbReference type="PDBsum" id="6G7G"/>
<dbReference type="BMRB" id="Q9FLY6"/>
<dbReference type="SMR" id="Q9FLY6"/>
<dbReference type="PaxDb" id="3702-AT5G39493.1"/>
<dbReference type="ProteomicsDB" id="232549"/>
<dbReference type="EnsemblPlants" id="AT5G39493.1">
    <property type="protein sequence ID" value="AT5G39493.1"/>
    <property type="gene ID" value="AT5G39493"/>
</dbReference>
<dbReference type="GeneID" id="6241023"/>
<dbReference type="Gramene" id="AT5G39493.1">
    <property type="protein sequence ID" value="AT5G39493.1"/>
    <property type="gene ID" value="AT5G39493"/>
</dbReference>
<dbReference type="KEGG" id="ath:AT5G39493"/>
<dbReference type="Araport" id="AT5G39493"/>
<dbReference type="TAIR" id="AT5G39493">
    <property type="gene designation" value="SPH15"/>
</dbReference>
<dbReference type="HOGENOM" id="CLU_125658_3_0_1"/>
<dbReference type="InParanoid" id="Q9FLY6"/>
<dbReference type="OMA" id="GRNLEYH"/>
<dbReference type="PRO" id="PR:Q9FLY6"/>
<dbReference type="Proteomes" id="UP000006548">
    <property type="component" value="Chromosome 5"/>
</dbReference>
<dbReference type="ExpressionAtlas" id="Q9FLY6">
    <property type="expression patterns" value="baseline"/>
</dbReference>
<dbReference type="GO" id="GO:0005576">
    <property type="term" value="C:extracellular region"/>
    <property type="evidence" value="ECO:0007669"/>
    <property type="project" value="UniProtKB-SubCell"/>
</dbReference>
<dbReference type="GO" id="GO:0060320">
    <property type="term" value="P:rejection of self pollen"/>
    <property type="evidence" value="ECO:0007669"/>
    <property type="project" value="UniProtKB-KW"/>
</dbReference>
<dbReference type="InterPro" id="IPR010264">
    <property type="entry name" value="Self-incomp_S1"/>
</dbReference>
<dbReference type="Pfam" id="PF05938">
    <property type="entry name" value="Self-incomp_S1"/>
    <property type="match status" value="1"/>
</dbReference>